<keyword id="KW-0238">DNA-binding</keyword>
<keyword id="KW-0479">Metal-binding</keyword>
<keyword id="KW-0507">mRNA processing</keyword>
<keyword id="KW-0508">mRNA splicing</keyword>
<keyword id="KW-0539">Nucleus</keyword>
<keyword id="KW-1185">Reference proteome</keyword>
<keyword id="KW-0747">Spliceosome</keyword>
<keyword id="KW-0862">Zinc</keyword>
<keyword id="KW-0863">Zinc-finger</keyword>
<accession>Q6BYU0</accession>
<organism>
    <name type="scientific">Debaryomyces hansenii (strain ATCC 36239 / CBS 767 / BCRC 21394 / JCM 1990 / NBRC 0083 / IGC 2968)</name>
    <name type="common">Yeast</name>
    <name type="synonym">Torulaspora hansenii</name>
    <dbReference type="NCBI Taxonomy" id="284592"/>
    <lineage>
        <taxon>Eukaryota</taxon>
        <taxon>Fungi</taxon>
        <taxon>Dikarya</taxon>
        <taxon>Ascomycota</taxon>
        <taxon>Saccharomycotina</taxon>
        <taxon>Pichiomycetes</taxon>
        <taxon>Debaryomycetaceae</taxon>
        <taxon>Debaryomyces</taxon>
    </lineage>
</organism>
<sequence length="232" mass="26123">MAMFKKRFIKKSEDGKVAKPKRKLDVDGFESDSDDVLEKETKSSSQGIKKHKPINGTKKPTRDVEHGQNSSTGNALSNPSLDQATTDKSAGEKSVGPIKPPPISIKTTTITDFQPDVCKDFLQTGYCGYGDTCKFLHIRDESKQRKPIEKEWETVTEQQKPDKSKEQVPYRCVLCSKDYTSPVKTECNHLFCQKCFMNRYRNLKKPNCFICGKDTGGVCSPVSKKELEKLIS</sequence>
<evidence type="ECO:0000250" key="1"/>
<evidence type="ECO:0000255" key="2">
    <source>
        <dbReference type="PROSITE-ProRule" id="PRU00175"/>
    </source>
</evidence>
<evidence type="ECO:0000255" key="3">
    <source>
        <dbReference type="PROSITE-ProRule" id="PRU00723"/>
    </source>
</evidence>
<evidence type="ECO:0000256" key="4">
    <source>
        <dbReference type="SAM" id="MobiDB-lite"/>
    </source>
</evidence>
<evidence type="ECO:0000305" key="5"/>
<gene>
    <name type="primary">CWC24</name>
    <name type="ordered locus">DEHA2A06996g</name>
</gene>
<proteinExistence type="inferred from homology"/>
<feature type="chain" id="PRO_0000055888" description="Pre-mRNA-splicing factor CWC24">
    <location>
        <begin position="1"/>
        <end position="232"/>
    </location>
</feature>
<feature type="zinc finger region" description="C3H1-type" evidence="3">
    <location>
        <begin position="112"/>
        <end position="140"/>
    </location>
</feature>
<feature type="zinc finger region" description="RING-type" evidence="2">
    <location>
        <begin position="172"/>
        <end position="212"/>
    </location>
</feature>
<feature type="region of interest" description="Disordered" evidence="4">
    <location>
        <begin position="1"/>
        <end position="107"/>
    </location>
</feature>
<feature type="compositionally biased region" description="Polar residues" evidence="4">
    <location>
        <begin position="67"/>
        <end position="88"/>
    </location>
</feature>
<name>CWC24_DEBHA</name>
<comment type="function">
    <text evidence="1">Involved in pre-mRNA splicing.</text>
</comment>
<comment type="subunit">
    <text evidence="1">Associated with the spliceosome.</text>
</comment>
<comment type="subcellular location">
    <subcellularLocation>
        <location evidence="1">Nucleus</location>
    </subcellularLocation>
</comment>
<comment type="similarity">
    <text evidence="5">Belongs to the CWC24 family.</text>
</comment>
<reference key="1">
    <citation type="journal article" date="2004" name="Nature">
        <title>Genome evolution in yeasts.</title>
        <authorList>
            <person name="Dujon B."/>
            <person name="Sherman D."/>
            <person name="Fischer G."/>
            <person name="Durrens P."/>
            <person name="Casaregola S."/>
            <person name="Lafontaine I."/>
            <person name="de Montigny J."/>
            <person name="Marck C."/>
            <person name="Neuveglise C."/>
            <person name="Talla E."/>
            <person name="Goffard N."/>
            <person name="Frangeul L."/>
            <person name="Aigle M."/>
            <person name="Anthouard V."/>
            <person name="Babour A."/>
            <person name="Barbe V."/>
            <person name="Barnay S."/>
            <person name="Blanchin S."/>
            <person name="Beckerich J.-M."/>
            <person name="Beyne E."/>
            <person name="Bleykasten C."/>
            <person name="Boisrame A."/>
            <person name="Boyer J."/>
            <person name="Cattolico L."/>
            <person name="Confanioleri F."/>
            <person name="de Daruvar A."/>
            <person name="Despons L."/>
            <person name="Fabre E."/>
            <person name="Fairhead C."/>
            <person name="Ferry-Dumazet H."/>
            <person name="Groppi A."/>
            <person name="Hantraye F."/>
            <person name="Hennequin C."/>
            <person name="Jauniaux N."/>
            <person name="Joyet P."/>
            <person name="Kachouri R."/>
            <person name="Kerrest A."/>
            <person name="Koszul R."/>
            <person name="Lemaire M."/>
            <person name="Lesur I."/>
            <person name="Ma L."/>
            <person name="Muller H."/>
            <person name="Nicaud J.-M."/>
            <person name="Nikolski M."/>
            <person name="Oztas S."/>
            <person name="Ozier-Kalogeropoulos O."/>
            <person name="Pellenz S."/>
            <person name="Potier S."/>
            <person name="Richard G.-F."/>
            <person name="Straub M.-L."/>
            <person name="Suleau A."/>
            <person name="Swennen D."/>
            <person name="Tekaia F."/>
            <person name="Wesolowski-Louvel M."/>
            <person name="Westhof E."/>
            <person name="Wirth B."/>
            <person name="Zeniou-Meyer M."/>
            <person name="Zivanovic Y."/>
            <person name="Bolotin-Fukuhara M."/>
            <person name="Thierry A."/>
            <person name="Bouchier C."/>
            <person name="Caudron B."/>
            <person name="Scarpelli C."/>
            <person name="Gaillardin C."/>
            <person name="Weissenbach J."/>
            <person name="Wincker P."/>
            <person name="Souciet J.-L."/>
        </authorList>
    </citation>
    <scope>NUCLEOTIDE SEQUENCE [LARGE SCALE GENOMIC DNA]</scope>
    <source>
        <strain>ATCC 36239 / CBS 767 / BCRC 21394 / JCM 1990 / NBRC 0083 / IGC 2968</strain>
    </source>
</reference>
<dbReference type="EMBL" id="CR382133">
    <property type="protein sequence ID" value="CAG84585.2"/>
    <property type="molecule type" value="Genomic_DNA"/>
</dbReference>
<dbReference type="RefSeq" id="XP_456629.2">
    <property type="nucleotide sequence ID" value="XM_456629.1"/>
</dbReference>
<dbReference type="SMR" id="Q6BYU0"/>
<dbReference type="FunCoup" id="Q6BYU0">
    <property type="interactions" value="325"/>
</dbReference>
<dbReference type="STRING" id="284592.Q6BYU0"/>
<dbReference type="GeneID" id="2899824"/>
<dbReference type="KEGG" id="dha:DEHA2A06996g"/>
<dbReference type="VEuPathDB" id="FungiDB:DEHA2A06996g"/>
<dbReference type="eggNOG" id="KOG1813">
    <property type="taxonomic scope" value="Eukaryota"/>
</dbReference>
<dbReference type="HOGENOM" id="CLU_050460_3_0_1"/>
<dbReference type="InParanoid" id="Q6BYU0"/>
<dbReference type="OMA" id="DYKSPIK"/>
<dbReference type="OrthoDB" id="25761at2759"/>
<dbReference type="Proteomes" id="UP000000599">
    <property type="component" value="Chromosome A"/>
</dbReference>
<dbReference type="GO" id="GO:0000974">
    <property type="term" value="C:Prp19 complex"/>
    <property type="evidence" value="ECO:0007669"/>
    <property type="project" value="EnsemblFungi"/>
</dbReference>
<dbReference type="GO" id="GO:0005684">
    <property type="term" value="C:U2-type spliceosomal complex"/>
    <property type="evidence" value="ECO:0007669"/>
    <property type="project" value="EnsemblFungi"/>
</dbReference>
<dbReference type="GO" id="GO:0003677">
    <property type="term" value="F:DNA binding"/>
    <property type="evidence" value="ECO:0007669"/>
    <property type="project" value="UniProtKB-KW"/>
</dbReference>
<dbReference type="GO" id="GO:0008270">
    <property type="term" value="F:zinc ion binding"/>
    <property type="evidence" value="ECO:0007669"/>
    <property type="project" value="UniProtKB-KW"/>
</dbReference>
<dbReference type="GO" id="GO:0000349">
    <property type="term" value="P:generation of catalytic spliceosome for first transesterification step"/>
    <property type="evidence" value="ECO:0007669"/>
    <property type="project" value="EnsemblFungi"/>
</dbReference>
<dbReference type="GO" id="GO:0034247">
    <property type="term" value="P:snoRNA splicing"/>
    <property type="evidence" value="ECO:0007669"/>
    <property type="project" value="EnsemblFungi"/>
</dbReference>
<dbReference type="Gene3D" id="4.10.1000.10">
    <property type="entry name" value="Zinc finger, CCCH-type"/>
    <property type="match status" value="1"/>
</dbReference>
<dbReference type="Gene3D" id="3.30.40.10">
    <property type="entry name" value="Zinc/RING finger domain, C3HC4 (zinc finger)"/>
    <property type="match status" value="1"/>
</dbReference>
<dbReference type="InterPro" id="IPR039971">
    <property type="entry name" value="CWC24-like"/>
</dbReference>
<dbReference type="InterPro" id="IPR000571">
    <property type="entry name" value="Znf_CCCH"/>
</dbReference>
<dbReference type="InterPro" id="IPR036855">
    <property type="entry name" value="Znf_CCCH_sf"/>
</dbReference>
<dbReference type="InterPro" id="IPR001841">
    <property type="entry name" value="Znf_RING"/>
</dbReference>
<dbReference type="InterPro" id="IPR013083">
    <property type="entry name" value="Znf_RING/FYVE/PHD"/>
</dbReference>
<dbReference type="PANTHER" id="PTHR12930:SF0">
    <property type="entry name" value="RING FINGER PROTEIN 113B"/>
    <property type="match status" value="1"/>
</dbReference>
<dbReference type="PANTHER" id="PTHR12930">
    <property type="entry name" value="ZINC FINGER PROTEIN 183"/>
    <property type="match status" value="1"/>
</dbReference>
<dbReference type="Pfam" id="PF13920">
    <property type="entry name" value="zf-C3HC4_3"/>
    <property type="match status" value="1"/>
</dbReference>
<dbReference type="Pfam" id="PF00642">
    <property type="entry name" value="zf-CCCH"/>
    <property type="match status" value="1"/>
</dbReference>
<dbReference type="SMART" id="SM00184">
    <property type="entry name" value="RING"/>
    <property type="match status" value="1"/>
</dbReference>
<dbReference type="SMART" id="SM00356">
    <property type="entry name" value="ZnF_C3H1"/>
    <property type="match status" value="1"/>
</dbReference>
<dbReference type="SUPFAM" id="SSF90229">
    <property type="entry name" value="CCCH zinc finger"/>
    <property type="match status" value="1"/>
</dbReference>
<dbReference type="SUPFAM" id="SSF57850">
    <property type="entry name" value="RING/U-box"/>
    <property type="match status" value="1"/>
</dbReference>
<dbReference type="PROSITE" id="PS50103">
    <property type="entry name" value="ZF_C3H1"/>
    <property type="match status" value="1"/>
</dbReference>
<dbReference type="PROSITE" id="PS50089">
    <property type="entry name" value="ZF_RING_2"/>
    <property type="match status" value="1"/>
</dbReference>
<protein>
    <recommendedName>
        <fullName>Pre-mRNA-splicing factor CWC24</fullName>
    </recommendedName>
</protein>